<name>NUOCD_SALCH</name>
<protein>
    <recommendedName>
        <fullName evidence="1">NADH-quinone oxidoreductase subunit C/D</fullName>
        <ecNumber evidence="1">7.1.1.-</ecNumber>
    </recommendedName>
    <alternativeName>
        <fullName evidence="1">NADH dehydrogenase I subunit C/D</fullName>
    </alternativeName>
    <alternativeName>
        <fullName evidence="1">NDH-1 subunit C/D</fullName>
    </alternativeName>
</protein>
<reference key="1">
    <citation type="journal article" date="2005" name="Nucleic Acids Res.">
        <title>The genome sequence of Salmonella enterica serovar Choleraesuis, a highly invasive and resistant zoonotic pathogen.</title>
        <authorList>
            <person name="Chiu C.-H."/>
            <person name="Tang P."/>
            <person name="Chu C."/>
            <person name="Hu S."/>
            <person name="Bao Q."/>
            <person name="Yu J."/>
            <person name="Chou Y.-Y."/>
            <person name="Wang H.-S."/>
            <person name="Lee Y.-S."/>
        </authorList>
    </citation>
    <scope>NUCLEOTIDE SEQUENCE [LARGE SCALE GENOMIC DNA]</scope>
    <source>
        <strain>SC-B67</strain>
    </source>
</reference>
<evidence type="ECO:0000255" key="1">
    <source>
        <dbReference type="HAMAP-Rule" id="MF_01359"/>
    </source>
</evidence>
<evidence type="ECO:0000305" key="2"/>
<accession>Q57M30</accession>
<keyword id="KW-0997">Cell inner membrane</keyword>
<keyword id="KW-1003">Cell membrane</keyword>
<keyword id="KW-0472">Membrane</keyword>
<keyword id="KW-0511">Multifunctional enzyme</keyword>
<keyword id="KW-0520">NAD</keyword>
<keyword id="KW-0874">Quinone</keyword>
<keyword id="KW-1278">Translocase</keyword>
<keyword id="KW-0813">Transport</keyword>
<keyword id="KW-0830">Ubiquinone</keyword>
<sequence length="596" mass="68392">MTDLTAQDAAWSTRDHLDDPVIGELRNRFGPDAFTVQATRTGIPVVWVKREQLLEVGDFLKKLPKPYVMLFDLHGMDERLRTHRDGLPAADFSVFYHLISIERNRDIMLKVALSENDLRVPTFTKLFPNANWYERETWEMFGIDIEGHPHLTRIMMPQTWEGHPLRKDYPARATEFDPFELTKAKQDLEMEALTFKPEDWGMKRGTDNEDFMFLNLGPNHPSAHGAFRIILQLDGEEIVDCVPDIGYHHRGAEKMGERQSWHSYIPYTDRIEYLGGCVNEMPYVLAVEKLAGITVSDRVNVIRVMLSELFRINSHLLYISTFIQDVGAMTPVFFAFTDRQKIYDLVEAITGFRMHPAWFRIGGVAHDLPRGWDRLLREFLEWMPKRLDSYEKAALRNTILKGRSQGVAAYGAKEALEWGTTGAGLRATGIDFDVRKWRPYSGYENFDFEVPVGGGVSDCYTRVMLKVEELRQSLRILQQCLDNMPEGPFKADHPLTTPPPKERTLQHIETLITHFLQVSWGPVMPAQESFQMVEATKGINSYYLTSDGSTMSYRTRVRTPSFAHLQQIPSAIRGSLVSDLIVYLGSIDFVMSDVDR</sequence>
<dbReference type="EC" id="7.1.1.-" evidence="1"/>
<dbReference type="EMBL" id="AE017220">
    <property type="protein sequence ID" value="AAX66232.1"/>
    <property type="status" value="ALT_INIT"/>
    <property type="molecule type" value="Genomic_DNA"/>
</dbReference>
<dbReference type="SMR" id="Q57M30"/>
<dbReference type="KEGG" id="sec:SCH_2326"/>
<dbReference type="HOGENOM" id="CLU_015134_3_2_6"/>
<dbReference type="Proteomes" id="UP000000538">
    <property type="component" value="Chromosome"/>
</dbReference>
<dbReference type="GO" id="GO:0030964">
    <property type="term" value="C:NADH dehydrogenase complex"/>
    <property type="evidence" value="ECO:0007669"/>
    <property type="project" value="InterPro"/>
</dbReference>
<dbReference type="GO" id="GO:0005886">
    <property type="term" value="C:plasma membrane"/>
    <property type="evidence" value="ECO:0007669"/>
    <property type="project" value="UniProtKB-SubCell"/>
</dbReference>
<dbReference type="GO" id="GO:0051287">
    <property type="term" value="F:NAD binding"/>
    <property type="evidence" value="ECO:0007669"/>
    <property type="project" value="InterPro"/>
</dbReference>
<dbReference type="GO" id="GO:0008137">
    <property type="term" value="F:NADH dehydrogenase (ubiquinone) activity"/>
    <property type="evidence" value="ECO:0007669"/>
    <property type="project" value="InterPro"/>
</dbReference>
<dbReference type="GO" id="GO:0050136">
    <property type="term" value="F:NADH:ubiquinone reductase (non-electrogenic) activity"/>
    <property type="evidence" value="ECO:0007669"/>
    <property type="project" value="UniProtKB-UniRule"/>
</dbReference>
<dbReference type="GO" id="GO:0048038">
    <property type="term" value="F:quinone binding"/>
    <property type="evidence" value="ECO:0007669"/>
    <property type="project" value="UniProtKB-KW"/>
</dbReference>
<dbReference type="FunFam" id="1.10.645.10:FF:000001">
    <property type="entry name" value="NADH-quinone oxidoreductase subunit C/D"/>
    <property type="match status" value="1"/>
</dbReference>
<dbReference type="FunFam" id="3.30.460.80:FF:000001">
    <property type="entry name" value="NADH-quinone oxidoreductase subunit C/D"/>
    <property type="match status" value="1"/>
</dbReference>
<dbReference type="Gene3D" id="1.10.645.10">
    <property type="entry name" value="Cytochrome-c3 Hydrogenase, chain B"/>
    <property type="match status" value="1"/>
</dbReference>
<dbReference type="Gene3D" id="3.30.460.80">
    <property type="entry name" value="NADH:ubiquinone oxidoreductase, 30kDa subunit"/>
    <property type="match status" value="1"/>
</dbReference>
<dbReference type="HAMAP" id="MF_01359">
    <property type="entry name" value="NDH1_NuoCD_1"/>
    <property type="match status" value="1"/>
</dbReference>
<dbReference type="HAMAP" id="MF_01358">
    <property type="entry name" value="NDH1_NuoD"/>
    <property type="match status" value="1"/>
</dbReference>
<dbReference type="InterPro" id="IPR010218">
    <property type="entry name" value="NADH_DH_suC"/>
</dbReference>
<dbReference type="InterPro" id="IPR023062">
    <property type="entry name" value="NADH_DH_suCD"/>
</dbReference>
<dbReference type="InterPro" id="IPR001135">
    <property type="entry name" value="NADH_Q_OxRdtase_suD"/>
</dbReference>
<dbReference type="InterPro" id="IPR037232">
    <property type="entry name" value="NADH_quin_OxRdtase_su_C/D-like"/>
</dbReference>
<dbReference type="InterPro" id="IPR001268">
    <property type="entry name" value="NADH_UbQ_OxRdtase_30kDa_su"/>
</dbReference>
<dbReference type="InterPro" id="IPR014029">
    <property type="entry name" value="NADH_UbQ_OxRdtase_49kDa_CS"/>
</dbReference>
<dbReference type="InterPro" id="IPR022885">
    <property type="entry name" value="NDH1_su_D/H"/>
</dbReference>
<dbReference type="InterPro" id="IPR029014">
    <property type="entry name" value="NiFe-Hase_large"/>
</dbReference>
<dbReference type="NCBIfam" id="TIGR01961">
    <property type="entry name" value="NuoC_fam"/>
    <property type="match status" value="1"/>
</dbReference>
<dbReference type="NCBIfam" id="TIGR01962">
    <property type="entry name" value="NuoD"/>
    <property type="match status" value="1"/>
</dbReference>
<dbReference type="NCBIfam" id="NF004739">
    <property type="entry name" value="PRK06075.1"/>
    <property type="match status" value="1"/>
</dbReference>
<dbReference type="NCBIfam" id="NF008728">
    <property type="entry name" value="PRK11742.1"/>
    <property type="match status" value="1"/>
</dbReference>
<dbReference type="PANTHER" id="PTHR11993:SF45">
    <property type="entry name" value="NADH-QUINONE OXIDOREDUCTASE SUBUNIT C_D"/>
    <property type="match status" value="1"/>
</dbReference>
<dbReference type="PANTHER" id="PTHR11993">
    <property type="entry name" value="NADH-UBIQUINONE OXIDOREDUCTASE 49 KDA SUBUNIT"/>
    <property type="match status" value="1"/>
</dbReference>
<dbReference type="Pfam" id="PF00329">
    <property type="entry name" value="Complex1_30kDa"/>
    <property type="match status" value="1"/>
</dbReference>
<dbReference type="Pfam" id="PF00346">
    <property type="entry name" value="Complex1_49kDa"/>
    <property type="match status" value="1"/>
</dbReference>
<dbReference type="SUPFAM" id="SSF56762">
    <property type="entry name" value="HydB/Nqo4-like"/>
    <property type="match status" value="1"/>
</dbReference>
<dbReference type="SUPFAM" id="SSF143243">
    <property type="entry name" value="Nqo5-like"/>
    <property type="match status" value="1"/>
</dbReference>
<dbReference type="PROSITE" id="PS00535">
    <property type="entry name" value="COMPLEX1_49K"/>
    <property type="match status" value="1"/>
</dbReference>
<organism>
    <name type="scientific">Salmonella choleraesuis (strain SC-B67)</name>
    <dbReference type="NCBI Taxonomy" id="321314"/>
    <lineage>
        <taxon>Bacteria</taxon>
        <taxon>Pseudomonadati</taxon>
        <taxon>Pseudomonadota</taxon>
        <taxon>Gammaproteobacteria</taxon>
        <taxon>Enterobacterales</taxon>
        <taxon>Enterobacteriaceae</taxon>
        <taxon>Salmonella</taxon>
    </lineage>
</organism>
<feature type="chain" id="PRO_0000358682" description="NADH-quinone oxidoreductase subunit C/D">
    <location>
        <begin position="1"/>
        <end position="596"/>
    </location>
</feature>
<feature type="region of interest" description="NADH dehydrogenase I subunit C" evidence="1">
    <location>
        <begin position="1"/>
        <end position="186"/>
    </location>
</feature>
<feature type="region of interest" description="NADH dehydrogenase I subunit D" evidence="1">
    <location>
        <begin position="210"/>
        <end position="596"/>
    </location>
</feature>
<proteinExistence type="inferred from homology"/>
<gene>
    <name evidence="1" type="primary">nuoC</name>
    <name evidence="1" type="synonym">nuoCD</name>
    <name evidence="1" type="synonym">nuoD</name>
    <name type="ordered locus">SCH_2326</name>
</gene>
<comment type="function">
    <text evidence="1">NDH-1 shuttles electrons from NADH, via FMN and iron-sulfur (Fe-S) centers, to quinones in the respiratory chain. The immediate electron acceptor for the enzyme in this species is believed to be ubiquinone. Couples the redox reaction to proton translocation (for every two electrons transferred, four hydrogen ions are translocated across the cytoplasmic membrane), and thus conserves the redox energy in a proton gradient.</text>
</comment>
<comment type="catalytic activity">
    <reaction evidence="1">
        <text>a quinone + NADH + 5 H(+)(in) = a quinol + NAD(+) + 4 H(+)(out)</text>
        <dbReference type="Rhea" id="RHEA:57888"/>
        <dbReference type="ChEBI" id="CHEBI:15378"/>
        <dbReference type="ChEBI" id="CHEBI:24646"/>
        <dbReference type="ChEBI" id="CHEBI:57540"/>
        <dbReference type="ChEBI" id="CHEBI:57945"/>
        <dbReference type="ChEBI" id="CHEBI:132124"/>
    </reaction>
</comment>
<comment type="subunit">
    <text evidence="1">NDH-1 is composed of 13 different subunits. Subunits NuoB, CD, E, F, and G constitute the peripheral sector of the complex.</text>
</comment>
<comment type="subcellular location">
    <subcellularLocation>
        <location evidence="1">Cell inner membrane</location>
        <topology evidence="1">Peripheral membrane protein</topology>
        <orientation evidence="1">Cytoplasmic side</orientation>
    </subcellularLocation>
</comment>
<comment type="similarity">
    <text evidence="1">In the N-terminal section; belongs to the complex I 30 kDa subunit family.</text>
</comment>
<comment type="similarity">
    <text evidence="1">In the C-terminal section; belongs to the complex I 49 kDa subunit family.</text>
</comment>
<comment type="sequence caution" evidence="2">
    <conflict type="erroneous initiation">
        <sequence resource="EMBL-CDS" id="AAX66232"/>
    </conflict>
</comment>